<feature type="chain" id="PRO_1000127473" description="Probable sugar efflux transporter">
    <location>
        <begin position="1"/>
        <end position="396"/>
    </location>
</feature>
<feature type="transmembrane region" description="Helical" evidence="1">
    <location>
        <begin position="15"/>
        <end position="35"/>
    </location>
</feature>
<feature type="transmembrane region" description="Helical" evidence="1">
    <location>
        <begin position="50"/>
        <end position="70"/>
    </location>
</feature>
<feature type="transmembrane region" description="Helical" evidence="1">
    <location>
        <begin position="81"/>
        <end position="101"/>
    </location>
</feature>
<feature type="transmembrane region" description="Helical" evidence="1">
    <location>
        <begin position="103"/>
        <end position="123"/>
    </location>
</feature>
<feature type="transmembrane region" description="Helical" evidence="1">
    <location>
        <begin position="136"/>
        <end position="156"/>
    </location>
</feature>
<feature type="transmembrane region" description="Helical" evidence="1">
    <location>
        <begin position="169"/>
        <end position="189"/>
    </location>
</feature>
<feature type="transmembrane region" description="Helical" evidence="1">
    <location>
        <begin position="209"/>
        <end position="229"/>
    </location>
</feature>
<feature type="transmembrane region" description="Helical" evidence="1">
    <location>
        <begin position="246"/>
        <end position="266"/>
    </location>
</feature>
<feature type="transmembrane region" description="Helical" evidence="1">
    <location>
        <begin position="275"/>
        <end position="295"/>
    </location>
</feature>
<feature type="transmembrane region" description="Helical" evidence="1">
    <location>
        <begin position="301"/>
        <end position="321"/>
    </location>
</feature>
<feature type="transmembrane region" description="Helical" evidence="1">
    <location>
        <begin position="333"/>
        <end position="353"/>
    </location>
</feature>
<feature type="transmembrane region" description="Helical" evidence="1">
    <location>
        <begin position="364"/>
        <end position="384"/>
    </location>
</feature>
<accession>B4THV6</accession>
<protein>
    <recommendedName>
        <fullName evidence="1">Probable sugar efflux transporter</fullName>
    </recommendedName>
</protein>
<keyword id="KW-0997">Cell inner membrane</keyword>
<keyword id="KW-1003">Cell membrane</keyword>
<keyword id="KW-0472">Membrane</keyword>
<keyword id="KW-0762">Sugar transport</keyword>
<keyword id="KW-0812">Transmembrane</keyword>
<keyword id="KW-1133">Transmembrane helix</keyword>
<keyword id="KW-0813">Transport</keyword>
<sequence length="396" mass="42407">MTINPVSRKVAWLRVVTLAIAAFIFNTTEFVPVGLLSDIAESFHMQTAQVGIMLTIYAWVVAVMSLPFMLLTSQMERRKLLICLFVLFIASHVLSFLAWNFTVLVISRIGIAFAHAIFWSITASLAIRLAPAGKRAQALSLIATGTALAMVLGLPIGRVVGQYFGWRTTFFAIGMGALITLLCLIKLLPKLPSEHSGSLKSLPLLFRRPALMSLYVLTVVVVTAHYTAYSYIEPFVQNVAGLSANFATVLLLILGGAGIIGSLVFGKLGNRHASSLVSIAIALLVVCLLLLLPAADSEAHLAILSIFWGIAIMVIGLGMQVKVLALAPDATDVAMALFSGIFNIGIGAGALVGNQVSLHWSMSAIGYIGAIPACAALVWAVLIFRKWPVTLEEQPH</sequence>
<name>SOTB_SALHS</name>
<comment type="function">
    <text evidence="1">Involved in the efflux of sugars. The physiological role may be the reduction of the intracellular concentration of toxic sugars or sugar metabolites.</text>
</comment>
<comment type="subcellular location">
    <subcellularLocation>
        <location evidence="1">Cell inner membrane</location>
        <topology evidence="1">Multi-pass membrane protein</topology>
    </subcellularLocation>
</comment>
<comment type="similarity">
    <text evidence="1">Belongs to the major facilitator superfamily. SotB (TC 2.A.1.2) family.</text>
</comment>
<proteinExistence type="inferred from homology"/>
<organism>
    <name type="scientific">Salmonella heidelberg (strain SL476)</name>
    <dbReference type="NCBI Taxonomy" id="454169"/>
    <lineage>
        <taxon>Bacteria</taxon>
        <taxon>Pseudomonadati</taxon>
        <taxon>Pseudomonadota</taxon>
        <taxon>Gammaproteobacteria</taxon>
        <taxon>Enterobacterales</taxon>
        <taxon>Enterobacteriaceae</taxon>
        <taxon>Salmonella</taxon>
    </lineage>
</organism>
<gene>
    <name evidence="1" type="primary">sotB</name>
    <name type="ordered locus">SeHA_C1694</name>
</gene>
<evidence type="ECO:0000255" key="1">
    <source>
        <dbReference type="HAMAP-Rule" id="MF_00517"/>
    </source>
</evidence>
<reference key="1">
    <citation type="journal article" date="2011" name="J. Bacteriol.">
        <title>Comparative genomics of 28 Salmonella enterica isolates: evidence for CRISPR-mediated adaptive sublineage evolution.</title>
        <authorList>
            <person name="Fricke W.F."/>
            <person name="Mammel M.K."/>
            <person name="McDermott P.F."/>
            <person name="Tartera C."/>
            <person name="White D.G."/>
            <person name="Leclerc J.E."/>
            <person name="Ravel J."/>
            <person name="Cebula T.A."/>
        </authorList>
    </citation>
    <scope>NUCLEOTIDE SEQUENCE [LARGE SCALE GENOMIC DNA]</scope>
    <source>
        <strain>SL476</strain>
    </source>
</reference>
<dbReference type="EMBL" id="CP001120">
    <property type="protein sequence ID" value="ACF69894.1"/>
    <property type="molecule type" value="Genomic_DNA"/>
</dbReference>
<dbReference type="RefSeq" id="WP_000154617.1">
    <property type="nucleotide sequence ID" value="NC_011083.1"/>
</dbReference>
<dbReference type="SMR" id="B4THV6"/>
<dbReference type="KEGG" id="seh:SeHA_C1694"/>
<dbReference type="HOGENOM" id="CLU_001265_61_2_6"/>
<dbReference type="Proteomes" id="UP000001866">
    <property type="component" value="Chromosome"/>
</dbReference>
<dbReference type="GO" id="GO:0005886">
    <property type="term" value="C:plasma membrane"/>
    <property type="evidence" value="ECO:0007669"/>
    <property type="project" value="UniProtKB-SubCell"/>
</dbReference>
<dbReference type="GO" id="GO:0015144">
    <property type="term" value="F:carbohydrate transmembrane transporter activity"/>
    <property type="evidence" value="ECO:0007669"/>
    <property type="project" value="UniProtKB-UniRule"/>
</dbReference>
<dbReference type="CDD" id="cd17324">
    <property type="entry name" value="MFS_NepI_like"/>
    <property type="match status" value="1"/>
</dbReference>
<dbReference type="Gene3D" id="1.20.1250.20">
    <property type="entry name" value="MFS general substrate transporter like domains"/>
    <property type="match status" value="1"/>
</dbReference>
<dbReference type="HAMAP" id="MF_00517">
    <property type="entry name" value="MFS_SotB"/>
    <property type="match status" value="1"/>
</dbReference>
<dbReference type="InterPro" id="IPR011701">
    <property type="entry name" value="MFS"/>
</dbReference>
<dbReference type="InterPro" id="IPR020846">
    <property type="entry name" value="MFS_dom"/>
</dbReference>
<dbReference type="InterPro" id="IPR050189">
    <property type="entry name" value="MFS_Efflux_Transporters"/>
</dbReference>
<dbReference type="InterPro" id="IPR036259">
    <property type="entry name" value="MFS_trans_sf"/>
</dbReference>
<dbReference type="InterPro" id="IPR023495">
    <property type="entry name" value="Sugar_effux_transptr_put"/>
</dbReference>
<dbReference type="NCBIfam" id="NF002921">
    <property type="entry name" value="PRK03545.1"/>
    <property type="match status" value="1"/>
</dbReference>
<dbReference type="PANTHER" id="PTHR43124">
    <property type="entry name" value="PURINE EFFLUX PUMP PBUE"/>
    <property type="match status" value="1"/>
</dbReference>
<dbReference type="PANTHER" id="PTHR43124:SF4">
    <property type="entry name" value="SUGAR EFFLUX TRANSPORTER"/>
    <property type="match status" value="1"/>
</dbReference>
<dbReference type="Pfam" id="PF07690">
    <property type="entry name" value="MFS_1"/>
    <property type="match status" value="1"/>
</dbReference>
<dbReference type="SUPFAM" id="SSF103473">
    <property type="entry name" value="MFS general substrate transporter"/>
    <property type="match status" value="1"/>
</dbReference>
<dbReference type="PROSITE" id="PS50850">
    <property type="entry name" value="MFS"/>
    <property type="match status" value="1"/>
</dbReference>